<protein>
    <recommendedName>
        <fullName>Pentatricopeptide repeat-containing protein At1g71460, chloroplastic</fullName>
    </recommendedName>
</protein>
<evidence type="ECO:0000255" key="1"/>
<evidence type="ECO:0000256" key="2">
    <source>
        <dbReference type="SAM" id="MobiDB-lite"/>
    </source>
</evidence>
<evidence type="ECO:0000305" key="3"/>
<keyword id="KW-0150">Chloroplast</keyword>
<keyword id="KW-0934">Plastid</keyword>
<keyword id="KW-1185">Reference proteome</keyword>
<keyword id="KW-0677">Repeat</keyword>
<keyword id="KW-0809">Transit peptide</keyword>
<dbReference type="EMBL" id="AC016163">
    <property type="protein sequence ID" value="AAG51819.1"/>
    <property type="molecule type" value="Genomic_DNA"/>
</dbReference>
<dbReference type="EMBL" id="CP002684">
    <property type="protein sequence ID" value="AEE35203.1"/>
    <property type="molecule type" value="Genomic_DNA"/>
</dbReference>
<dbReference type="RefSeq" id="NP_177302.1">
    <property type="nucleotide sequence ID" value="NM_105815.4"/>
</dbReference>
<dbReference type="SMR" id="Q9C9I3"/>
<dbReference type="FunCoup" id="Q9C9I3">
    <property type="interactions" value="486"/>
</dbReference>
<dbReference type="STRING" id="3702.Q9C9I3"/>
<dbReference type="PaxDb" id="3702-AT1G71460.1"/>
<dbReference type="ProteomicsDB" id="250577"/>
<dbReference type="EnsemblPlants" id="AT1G71460.1">
    <property type="protein sequence ID" value="AT1G71460.1"/>
    <property type="gene ID" value="AT1G71460"/>
</dbReference>
<dbReference type="GeneID" id="843487"/>
<dbReference type="Gramene" id="AT1G71460.1">
    <property type="protein sequence ID" value="AT1G71460.1"/>
    <property type="gene ID" value="AT1G71460"/>
</dbReference>
<dbReference type="KEGG" id="ath:AT1G71460"/>
<dbReference type="Araport" id="AT1G71460"/>
<dbReference type="TAIR" id="AT1G71460"/>
<dbReference type="eggNOG" id="KOG4197">
    <property type="taxonomic scope" value="Eukaryota"/>
</dbReference>
<dbReference type="HOGENOM" id="CLU_002706_15_6_1"/>
<dbReference type="InParanoid" id="Q9C9I3"/>
<dbReference type="OMA" id="WTAMIDC"/>
<dbReference type="PhylomeDB" id="Q9C9I3"/>
<dbReference type="PRO" id="PR:Q9C9I3"/>
<dbReference type="Proteomes" id="UP000006548">
    <property type="component" value="Chromosome 1"/>
</dbReference>
<dbReference type="ExpressionAtlas" id="Q9C9I3">
    <property type="expression patterns" value="baseline and differential"/>
</dbReference>
<dbReference type="GO" id="GO:0009507">
    <property type="term" value="C:chloroplast"/>
    <property type="evidence" value="ECO:0007669"/>
    <property type="project" value="UniProtKB-SubCell"/>
</dbReference>
<dbReference type="GO" id="GO:0003729">
    <property type="term" value="F:mRNA binding"/>
    <property type="evidence" value="ECO:0000314"/>
    <property type="project" value="TAIR"/>
</dbReference>
<dbReference type="GO" id="GO:0009451">
    <property type="term" value="P:RNA modification"/>
    <property type="evidence" value="ECO:0007669"/>
    <property type="project" value="InterPro"/>
</dbReference>
<dbReference type="FunFam" id="1.25.40.10:FF:001058">
    <property type="entry name" value="Pentatricopeptide repeat-containing protein chloroplastic"/>
    <property type="match status" value="1"/>
</dbReference>
<dbReference type="FunFam" id="1.25.40.10:FF:000951">
    <property type="entry name" value="Pentatricopeptide repeat-containing protein, chloroplastic"/>
    <property type="match status" value="1"/>
</dbReference>
<dbReference type="FunFam" id="1.25.40.10:FF:001061">
    <property type="entry name" value="Pentatricopeptide repeat-containing protein, chloroplastic"/>
    <property type="match status" value="1"/>
</dbReference>
<dbReference type="FunFam" id="1.25.40.10:FF:001490">
    <property type="entry name" value="Pentatricopeptide repeat-containing protein, chloroplastic"/>
    <property type="match status" value="1"/>
</dbReference>
<dbReference type="FunFam" id="1.25.40.10:FF:001702">
    <property type="entry name" value="Pentatricopeptide repeat-containing protein, chloroplastic"/>
    <property type="match status" value="1"/>
</dbReference>
<dbReference type="Gene3D" id="1.25.40.10">
    <property type="entry name" value="Tetratricopeptide repeat domain"/>
    <property type="match status" value="5"/>
</dbReference>
<dbReference type="InterPro" id="IPR002885">
    <property type="entry name" value="Pentatricopeptide_rpt"/>
</dbReference>
<dbReference type="InterPro" id="IPR046960">
    <property type="entry name" value="PPR_At4g14850-like_plant"/>
</dbReference>
<dbReference type="InterPro" id="IPR011990">
    <property type="entry name" value="TPR-like_helical_dom_sf"/>
</dbReference>
<dbReference type="NCBIfam" id="TIGR00756">
    <property type="entry name" value="PPR"/>
    <property type="match status" value="5"/>
</dbReference>
<dbReference type="PANTHER" id="PTHR47926:SF533">
    <property type="entry name" value="DYW DOMAIN-CONTAINING PROTEIN"/>
    <property type="match status" value="1"/>
</dbReference>
<dbReference type="PANTHER" id="PTHR47926">
    <property type="entry name" value="PENTATRICOPEPTIDE REPEAT-CONTAINING PROTEIN"/>
    <property type="match status" value="1"/>
</dbReference>
<dbReference type="Pfam" id="PF01535">
    <property type="entry name" value="PPR"/>
    <property type="match status" value="3"/>
</dbReference>
<dbReference type="Pfam" id="PF13041">
    <property type="entry name" value="PPR_2"/>
    <property type="match status" value="2"/>
</dbReference>
<dbReference type="Pfam" id="PF13812">
    <property type="entry name" value="PPR_3"/>
    <property type="match status" value="1"/>
</dbReference>
<dbReference type="PROSITE" id="PS51375">
    <property type="entry name" value="PPR"/>
    <property type="match status" value="14"/>
</dbReference>
<name>PP115_ARATH</name>
<comment type="subcellular location">
    <subcellularLocation>
        <location evidence="3">Plastid</location>
        <location evidence="3">Chloroplast</location>
    </subcellularLocation>
</comment>
<comment type="similarity">
    <text evidence="3">Belongs to the PPR family. PCMP-A subfamily.</text>
</comment>
<comment type="online information" name="Pentatricopeptide repeat proteins">
    <link uri="https://ppr.plantenergy.uwa.edu.au"/>
</comment>
<organism>
    <name type="scientific">Arabidopsis thaliana</name>
    <name type="common">Mouse-ear cress</name>
    <dbReference type="NCBI Taxonomy" id="3702"/>
    <lineage>
        <taxon>Eukaryota</taxon>
        <taxon>Viridiplantae</taxon>
        <taxon>Streptophyta</taxon>
        <taxon>Embryophyta</taxon>
        <taxon>Tracheophyta</taxon>
        <taxon>Spermatophyta</taxon>
        <taxon>Magnoliopsida</taxon>
        <taxon>eudicotyledons</taxon>
        <taxon>Gunneridae</taxon>
        <taxon>Pentapetalae</taxon>
        <taxon>rosids</taxon>
        <taxon>malvids</taxon>
        <taxon>Brassicales</taxon>
        <taxon>Brassicaceae</taxon>
        <taxon>Camelineae</taxon>
        <taxon>Arabidopsis</taxon>
    </lineage>
</organism>
<accession>Q9C9I3</accession>
<proteinExistence type="evidence at transcript level"/>
<sequence length="689" mass="77487">MEVVSSLGIRDLPASLSVTTSLNHRPHRSDKDGAPAKSPIRPSRTRRPSTSPAKKPKPFRERDAFPSSLPLHSKNPYIIHRDIQIFARQNNLEVALTILDYLEQRGIPVNATTFSALLEACVRRKSLLHGKQVHVHIRINGLESNEFLRTKLVHMYTACGSVKDAQKVFDESTSSNVYSWNALLRGTVISGKKRYQDVLSTFTEMRELGVDLNVYSLSNVFKSFAGASALRQGLKTHALAIKNGLFNSVFLKTSLVDMYFKCGKVGLARRVFDEIVERDIVVWGAMIAGLAHNKRQWEALGLFRTMISEEKIYPNSVILTTILPVLGDVKALKLGKEVHAHVLKSKNYVEQPFVHSGLIDLYCKCGDMASGRRVFYGSKQRNAISWTALMSGYAANGRFDQALRSIVWMQQEGFRPDVVTIATVLPVCAELRAIKQGKEIHCYALKNLFLPNVSLVTSLMVMYSKCGVPEYPIRLFDRLEQRNVKAWTAMIDCYVENCDLRAGIEVFRLMLLSKHRPDSVTMGRVLTVCSDLKALKLGKELHGHILKKEFESIPFVSARIIKMYGKCGDLRSANFSFDAVAVKGSLTWTAIIEAYGCNELFRDAINCFEQMVSRGFTPNTFTFTAVLSICSQAGFVDEAYRFFNLMLRMYNLQPSEEHYSLVIELLNRCGRVEEAQRLAVMSSSSSLQT</sequence>
<feature type="transit peptide" description="Chloroplast" evidence="1">
    <location>
        <begin position="1"/>
        <end position="49"/>
    </location>
</feature>
<feature type="chain" id="PRO_0000342856" description="Pentatricopeptide repeat-containing protein At1g71460, chloroplastic">
    <location>
        <begin position="50"/>
        <end position="689"/>
    </location>
</feature>
<feature type="repeat" description="PPR 1">
    <location>
        <begin position="75"/>
        <end position="109"/>
    </location>
</feature>
<feature type="repeat" description="PPR 2">
    <location>
        <begin position="110"/>
        <end position="144"/>
    </location>
</feature>
<feature type="repeat" description="PPR 3">
    <location>
        <begin position="145"/>
        <end position="175"/>
    </location>
</feature>
<feature type="repeat" description="PPR 4">
    <location>
        <begin position="176"/>
        <end position="212"/>
    </location>
</feature>
<feature type="repeat" description="PPR 5">
    <location>
        <begin position="213"/>
        <end position="247"/>
    </location>
</feature>
<feature type="repeat" description="PPR 6">
    <location>
        <begin position="248"/>
        <end position="282"/>
    </location>
</feature>
<feature type="repeat" description="PPR 7">
    <location>
        <begin position="283"/>
        <end position="309"/>
    </location>
</feature>
<feature type="repeat" description="PPR 8">
    <location>
        <begin position="315"/>
        <end position="350"/>
    </location>
</feature>
<feature type="repeat" description="PPR 9">
    <location>
        <begin position="351"/>
        <end position="381"/>
    </location>
</feature>
<feature type="repeat" description="PPR 10">
    <location>
        <begin position="382"/>
        <end position="416"/>
    </location>
</feature>
<feature type="repeat" description="PPR 11">
    <location>
        <begin position="417"/>
        <end position="451"/>
    </location>
</feature>
<feature type="repeat" description="PPR 12">
    <location>
        <begin position="452"/>
        <end position="482"/>
    </location>
</feature>
<feature type="repeat" description="PPR 13">
    <location>
        <begin position="483"/>
        <end position="517"/>
    </location>
</feature>
<feature type="repeat" description="PPR 14">
    <location>
        <begin position="518"/>
        <end position="552"/>
    </location>
</feature>
<feature type="repeat" description="PPR 15">
    <location>
        <begin position="553"/>
        <end position="583"/>
    </location>
</feature>
<feature type="repeat" description="PPR 16">
    <location>
        <begin position="584"/>
        <end position="618"/>
    </location>
</feature>
<feature type="repeat" description="PPR 17">
    <location>
        <begin position="619"/>
        <end position="649"/>
    </location>
</feature>
<feature type="repeat" description="PPR 18">
    <location>
        <begin position="655"/>
        <end position="689"/>
    </location>
</feature>
<feature type="region of interest" description="Disordered" evidence="2">
    <location>
        <begin position="16"/>
        <end position="68"/>
    </location>
</feature>
<feature type="compositionally biased region" description="Low complexity" evidence="2">
    <location>
        <begin position="38"/>
        <end position="52"/>
    </location>
</feature>
<gene>
    <name type="primary">PCMP-A3</name>
    <name type="ordered locus">At1g71460</name>
    <name type="ORF">F26A9.16</name>
</gene>
<reference key="1">
    <citation type="journal article" date="2000" name="Nature">
        <title>Sequence and analysis of chromosome 1 of the plant Arabidopsis thaliana.</title>
        <authorList>
            <person name="Theologis A."/>
            <person name="Ecker J.R."/>
            <person name="Palm C.J."/>
            <person name="Federspiel N.A."/>
            <person name="Kaul S."/>
            <person name="White O."/>
            <person name="Alonso J."/>
            <person name="Altafi H."/>
            <person name="Araujo R."/>
            <person name="Bowman C.L."/>
            <person name="Brooks S.Y."/>
            <person name="Buehler E."/>
            <person name="Chan A."/>
            <person name="Chao Q."/>
            <person name="Chen H."/>
            <person name="Cheuk R.F."/>
            <person name="Chin C.W."/>
            <person name="Chung M.K."/>
            <person name="Conn L."/>
            <person name="Conway A.B."/>
            <person name="Conway A.R."/>
            <person name="Creasy T.H."/>
            <person name="Dewar K."/>
            <person name="Dunn P."/>
            <person name="Etgu P."/>
            <person name="Feldblyum T.V."/>
            <person name="Feng J.-D."/>
            <person name="Fong B."/>
            <person name="Fujii C.Y."/>
            <person name="Gill J.E."/>
            <person name="Goldsmith A.D."/>
            <person name="Haas B."/>
            <person name="Hansen N.F."/>
            <person name="Hughes B."/>
            <person name="Huizar L."/>
            <person name="Hunter J.L."/>
            <person name="Jenkins J."/>
            <person name="Johnson-Hopson C."/>
            <person name="Khan S."/>
            <person name="Khaykin E."/>
            <person name="Kim C.J."/>
            <person name="Koo H.L."/>
            <person name="Kremenetskaia I."/>
            <person name="Kurtz D.B."/>
            <person name="Kwan A."/>
            <person name="Lam B."/>
            <person name="Langin-Hooper S."/>
            <person name="Lee A."/>
            <person name="Lee J.M."/>
            <person name="Lenz C.A."/>
            <person name="Li J.H."/>
            <person name="Li Y.-P."/>
            <person name="Lin X."/>
            <person name="Liu S.X."/>
            <person name="Liu Z.A."/>
            <person name="Luros J.S."/>
            <person name="Maiti R."/>
            <person name="Marziali A."/>
            <person name="Militscher J."/>
            <person name="Miranda M."/>
            <person name="Nguyen M."/>
            <person name="Nierman W.C."/>
            <person name="Osborne B.I."/>
            <person name="Pai G."/>
            <person name="Peterson J."/>
            <person name="Pham P.K."/>
            <person name="Rizzo M."/>
            <person name="Rooney T."/>
            <person name="Rowley D."/>
            <person name="Sakano H."/>
            <person name="Salzberg S.L."/>
            <person name="Schwartz J.R."/>
            <person name="Shinn P."/>
            <person name="Southwick A.M."/>
            <person name="Sun H."/>
            <person name="Tallon L.J."/>
            <person name="Tambunga G."/>
            <person name="Toriumi M.J."/>
            <person name="Town C.D."/>
            <person name="Utterback T."/>
            <person name="Van Aken S."/>
            <person name="Vaysberg M."/>
            <person name="Vysotskaia V.S."/>
            <person name="Walker M."/>
            <person name="Wu D."/>
            <person name="Yu G."/>
            <person name="Fraser C.M."/>
            <person name="Venter J.C."/>
            <person name="Davis R.W."/>
        </authorList>
    </citation>
    <scope>NUCLEOTIDE SEQUENCE [LARGE SCALE GENOMIC DNA]</scope>
    <source>
        <strain>cv. Columbia</strain>
    </source>
</reference>
<reference key="2">
    <citation type="journal article" date="2017" name="Plant J.">
        <title>Araport11: a complete reannotation of the Arabidopsis thaliana reference genome.</title>
        <authorList>
            <person name="Cheng C.Y."/>
            <person name="Krishnakumar V."/>
            <person name="Chan A.P."/>
            <person name="Thibaud-Nissen F."/>
            <person name="Schobel S."/>
            <person name="Town C.D."/>
        </authorList>
    </citation>
    <scope>GENOME REANNOTATION</scope>
    <source>
        <strain>cv. Columbia</strain>
    </source>
</reference>
<reference key="3">
    <citation type="journal article" date="2004" name="Plant Cell">
        <title>Genome-wide analysis of Arabidopsis pentatricopeptide repeat proteins reveals their essential role in organelle biogenesis.</title>
        <authorList>
            <person name="Lurin C."/>
            <person name="Andres C."/>
            <person name="Aubourg S."/>
            <person name="Bellaoui M."/>
            <person name="Bitton F."/>
            <person name="Bruyere C."/>
            <person name="Caboche M."/>
            <person name="Debast C."/>
            <person name="Gualberto J."/>
            <person name="Hoffmann B."/>
            <person name="Lecharny A."/>
            <person name="Le Ret M."/>
            <person name="Martin-Magniette M.-L."/>
            <person name="Mireau H."/>
            <person name="Peeters N."/>
            <person name="Renou J.-P."/>
            <person name="Szurek B."/>
            <person name="Taconnat L."/>
            <person name="Small I."/>
        </authorList>
    </citation>
    <scope>GENE FAMILY</scope>
</reference>